<reference key="1">
    <citation type="submission" date="2009-01" db="EMBL/GenBank/DDBJ databases">
        <title>Complete sequence of Desulfovibrio desulfuricans subsp. desulfuricans str. ATCC 27774.</title>
        <authorList>
            <consortium name="US DOE Joint Genome Institute"/>
            <person name="Lucas S."/>
            <person name="Copeland A."/>
            <person name="Lapidus A."/>
            <person name="Glavina del Rio T."/>
            <person name="Tice H."/>
            <person name="Bruce D."/>
            <person name="Goodwin L."/>
            <person name="Pitluck S."/>
            <person name="Sims D."/>
            <person name="Lu M."/>
            <person name="Kiss H."/>
            <person name="Meineke L."/>
            <person name="Brettin T."/>
            <person name="Detter J.C."/>
            <person name="Han C."/>
            <person name="Larimer F."/>
            <person name="Land M."/>
            <person name="Hauser L."/>
            <person name="Kyrpides N."/>
            <person name="Ovchinnikova G."/>
            <person name="Hazen T.C."/>
        </authorList>
    </citation>
    <scope>NUCLEOTIDE SEQUENCE [LARGE SCALE GENOMIC DNA]</scope>
    <source>
        <strain>ATCC 27774 / DSM 6949 / MB</strain>
    </source>
</reference>
<name>RS20_DESDA</name>
<feature type="chain" id="PRO_1000194241" description="Small ribosomal subunit protein bS20">
    <location>
        <begin position="1"/>
        <end position="89"/>
    </location>
</feature>
<feature type="region of interest" description="Disordered" evidence="2">
    <location>
        <begin position="1"/>
        <end position="26"/>
    </location>
</feature>
<feature type="compositionally biased region" description="Basic residues" evidence="2">
    <location>
        <begin position="1"/>
        <end position="12"/>
    </location>
</feature>
<sequence>MANHKSAIKRHRQSVERAGRNRAARTRVKNAIKQVRTAITGSDKAQAGEALVAATSVLSKAASKGAMHWKKAARKISRLARAVNSIEAQ</sequence>
<proteinExistence type="inferred from homology"/>
<dbReference type="EMBL" id="CP001358">
    <property type="protein sequence ID" value="ACL48824.1"/>
    <property type="molecule type" value="Genomic_DNA"/>
</dbReference>
<dbReference type="SMR" id="B8IZ97"/>
<dbReference type="STRING" id="525146.Ddes_0917"/>
<dbReference type="KEGG" id="dds:Ddes_0917"/>
<dbReference type="eggNOG" id="COG0268">
    <property type="taxonomic scope" value="Bacteria"/>
</dbReference>
<dbReference type="HOGENOM" id="CLU_160655_3_1_7"/>
<dbReference type="GO" id="GO:0005829">
    <property type="term" value="C:cytosol"/>
    <property type="evidence" value="ECO:0007669"/>
    <property type="project" value="TreeGrafter"/>
</dbReference>
<dbReference type="GO" id="GO:0015935">
    <property type="term" value="C:small ribosomal subunit"/>
    <property type="evidence" value="ECO:0007669"/>
    <property type="project" value="TreeGrafter"/>
</dbReference>
<dbReference type="GO" id="GO:0070181">
    <property type="term" value="F:small ribosomal subunit rRNA binding"/>
    <property type="evidence" value="ECO:0007669"/>
    <property type="project" value="TreeGrafter"/>
</dbReference>
<dbReference type="GO" id="GO:0003735">
    <property type="term" value="F:structural constituent of ribosome"/>
    <property type="evidence" value="ECO:0007669"/>
    <property type="project" value="InterPro"/>
</dbReference>
<dbReference type="GO" id="GO:0006412">
    <property type="term" value="P:translation"/>
    <property type="evidence" value="ECO:0007669"/>
    <property type="project" value="UniProtKB-UniRule"/>
</dbReference>
<dbReference type="Gene3D" id="1.20.58.110">
    <property type="entry name" value="Ribosomal protein S20"/>
    <property type="match status" value="1"/>
</dbReference>
<dbReference type="HAMAP" id="MF_00500">
    <property type="entry name" value="Ribosomal_bS20"/>
    <property type="match status" value="1"/>
</dbReference>
<dbReference type="InterPro" id="IPR002583">
    <property type="entry name" value="Ribosomal_bS20"/>
</dbReference>
<dbReference type="InterPro" id="IPR036510">
    <property type="entry name" value="Ribosomal_bS20_sf"/>
</dbReference>
<dbReference type="NCBIfam" id="TIGR00029">
    <property type="entry name" value="S20"/>
    <property type="match status" value="1"/>
</dbReference>
<dbReference type="PANTHER" id="PTHR33398">
    <property type="entry name" value="30S RIBOSOMAL PROTEIN S20"/>
    <property type="match status" value="1"/>
</dbReference>
<dbReference type="PANTHER" id="PTHR33398:SF1">
    <property type="entry name" value="SMALL RIBOSOMAL SUBUNIT PROTEIN BS20C"/>
    <property type="match status" value="1"/>
</dbReference>
<dbReference type="Pfam" id="PF01649">
    <property type="entry name" value="Ribosomal_S20p"/>
    <property type="match status" value="1"/>
</dbReference>
<dbReference type="SUPFAM" id="SSF46992">
    <property type="entry name" value="Ribosomal protein S20"/>
    <property type="match status" value="1"/>
</dbReference>
<protein>
    <recommendedName>
        <fullName evidence="1">Small ribosomal subunit protein bS20</fullName>
    </recommendedName>
    <alternativeName>
        <fullName evidence="3">30S ribosomal protein S20</fullName>
    </alternativeName>
</protein>
<gene>
    <name evidence="1" type="primary">rpsT</name>
    <name type="ordered locus">Ddes_0917</name>
</gene>
<organism>
    <name type="scientific">Desulfovibrio desulfuricans (strain ATCC 27774 / DSM 6949 / MB)</name>
    <dbReference type="NCBI Taxonomy" id="525146"/>
    <lineage>
        <taxon>Bacteria</taxon>
        <taxon>Pseudomonadati</taxon>
        <taxon>Thermodesulfobacteriota</taxon>
        <taxon>Desulfovibrionia</taxon>
        <taxon>Desulfovibrionales</taxon>
        <taxon>Desulfovibrionaceae</taxon>
        <taxon>Desulfovibrio</taxon>
    </lineage>
</organism>
<evidence type="ECO:0000255" key="1">
    <source>
        <dbReference type="HAMAP-Rule" id="MF_00500"/>
    </source>
</evidence>
<evidence type="ECO:0000256" key="2">
    <source>
        <dbReference type="SAM" id="MobiDB-lite"/>
    </source>
</evidence>
<evidence type="ECO:0000305" key="3"/>
<comment type="function">
    <text evidence="1">Binds directly to 16S ribosomal RNA.</text>
</comment>
<comment type="similarity">
    <text evidence="1">Belongs to the bacterial ribosomal protein bS20 family.</text>
</comment>
<keyword id="KW-0687">Ribonucleoprotein</keyword>
<keyword id="KW-0689">Ribosomal protein</keyword>
<keyword id="KW-0694">RNA-binding</keyword>
<keyword id="KW-0699">rRNA-binding</keyword>
<accession>B8IZ97</accession>